<gene>
    <name evidence="1" type="primary">infA</name>
    <name type="ordered locus">CBO3457</name>
    <name type="ordered locus">CLC_3401</name>
</gene>
<name>IF1_CLOBH</name>
<accession>A5I7I2</accession>
<accession>A7G8R4</accession>
<keyword id="KW-0963">Cytoplasm</keyword>
<keyword id="KW-0396">Initiation factor</keyword>
<keyword id="KW-0648">Protein biosynthesis</keyword>
<keyword id="KW-1185">Reference proteome</keyword>
<keyword id="KW-0694">RNA-binding</keyword>
<keyword id="KW-0699">rRNA-binding</keyword>
<comment type="function">
    <text evidence="1">One of the essential components for the initiation of protein synthesis. Stabilizes the binding of IF-2 and IF-3 on the 30S subunit to which N-formylmethionyl-tRNA(fMet) subsequently binds. Helps modulate mRNA selection, yielding the 30S pre-initiation complex (PIC). Upon addition of the 50S ribosomal subunit IF-1, IF-2 and IF-3 are released leaving the mature 70S translation initiation complex.</text>
</comment>
<comment type="subunit">
    <text evidence="1">Component of the 30S ribosomal translation pre-initiation complex which assembles on the 30S ribosome in the order IF-2 and IF-3, IF-1 and N-formylmethionyl-tRNA(fMet); mRNA recruitment can occur at any time during PIC assembly.</text>
</comment>
<comment type="subcellular location">
    <subcellularLocation>
        <location evidence="1">Cytoplasm</location>
    </subcellularLocation>
</comment>
<comment type="similarity">
    <text evidence="1">Belongs to the IF-1 family.</text>
</comment>
<proteinExistence type="inferred from homology"/>
<dbReference type="EMBL" id="CP000727">
    <property type="protein sequence ID" value="ABS36781.1"/>
    <property type="molecule type" value="Genomic_DNA"/>
</dbReference>
<dbReference type="EMBL" id="AM412317">
    <property type="protein sequence ID" value="CAL85017.1"/>
    <property type="molecule type" value="Genomic_DNA"/>
</dbReference>
<dbReference type="RefSeq" id="WP_003357316.1">
    <property type="nucleotide sequence ID" value="NC_009698.1"/>
</dbReference>
<dbReference type="RefSeq" id="YP_001255938.1">
    <property type="nucleotide sequence ID" value="NC_009495.1"/>
</dbReference>
<dbReference type="RefSeq" id="YP_001389179.1">
    <property type="nucleotide sequence ID" value="NC_009698.1"/>
</dbReference>
<dbReference type="SMR" id="A5I7I2"/>
<dbReference type="GeneID" id="92940226"/>
<dbReference type="KEGG" id="cbh:CLC_3401"/>
<dbReference type="KEGG" id="cbo:CBO3457"/>
<dbReference type="PATRIC" id="fig|413999.7.peg.3433"/>
<dbReference type="HOGENOM" id="CLU_151267_1_0_9"/>
<dbReference type="PRO" id="PR:A5I7I2"/>
<dbReference type="Proteomes" id="UP000001986">
    <property type="component" value="Chromosome"/>
</dbReference>
<dbReference type="GO" id="GO:0005829">
    <property type="term" value="C:cytosol"/>
    <property type="evidence" value="ECO:0000318"/>
    <property type="project" value="GO_Central"/>
</dbReference>
<dbReference type="GO" id="GO:0043022">
    <property type="term" value="F:ribosome binding"/>
    <property type="evidence" value="ECO:0000318"/>
    <property type="project" value="GO_Central"/>
</dbReference>
<dbReference type="GO" id="GO:0019843">
    <property type="term" value="F:rRNA binding"/>
    <property type="evidence" value="ECO:0007669"/>
    <property type="project" value="UniProtKB-UniRule"/>
</dbReference>
<dbReference type="GO" id="GO:0003743">
    <property type="term" value="F:translation initiation factor activity"/>
    <property type="evidence" value="ECO:0007669"/>
    <property type="project" value="UniProtKB-UniRule"/>
</dbReference>
<dbReference type="CDD" id="cd04451">
    <property type="entry name" value="S1_IF1"/>
    <property type="match status" value="1"/>
</dbReference>
<dbReference type="FunFam" id="2.40.50.140:FF:000002">
    <property type="entry name" value="Translation initiation factor IF-1"/>
    <property type="match status" value="1"/>
</dbReference>
<dbReference type="Gene3D" id="2.40.50.140">
    <property type="entry name" value="Nucleic acid-binding proteins"/>
    <property type="match status" value="1"/>
</dbReference>
<dbReference type="HAMAP" id="MF_00075">
    <property type="entry name" value="IF_1"/>
    <property type="match status" value="1"/>
</dbReference>
<dbReference type="InterPro" id="IPR012340">
    <property type="entry name" value="NA-bd_OB-fold"/>
</dbReference>
<dbReference type="InterPro" id="IPR006196">
    <property type="entry name" value="RNA-binding_domain_S1_IF1"/>
</dbReference>
<dbReference type="InterPro" id="IPR003029">
    <property type="entry name" value="S1_domain"/>
</dbReference>
<dbReference type="InterPro" id="IPR004368">
    <property type="entry name" value="TIF_IF1"/>
</dbReference>
<dbReference type="NCBIfam" id="TIGR00008">
    <property type="entry name" value="infA"/>
    <property type="match status" value="1"/>
</dbReference>
<dbReference type="PANTHER" id="PTHR33370">
    <property type="entry name" value="TRANSLATION INITIATION FACTOR IF-1, CHLOROPLASTIC"/>
    <property type="match status" value="1"/>
</dbReference>
<dbReference type="PANTHER" id="PTHR33370:SF1">
    <property type="entry name" value="TRANSLATION INITIATION FACTOR IF-1, CHLOROPLASTIC"/>
    <property type="match status" value="1"/>
</dbReference>
<dbReference type="Pfam" id="PF01176">
    <property type="entry name" value="eIF-1a"/>
    <property type="match status" value="1"/>
</dbReference>
<dbReference type="SMART" id="SM00316">
    <property type="entry name" value="S1"/>
    <property type="match status" value="1"/>
</dbReference>
<dbReference type="SUPFAM" id="SSF50249">
    <property type="entry name" value="Nucleic acid-binding proteins"/>
    <property type="match status" value="1"/>
</dbReference>
<dbReference type="PROSITE" id="PS50832">
    <property type="entry name" value="S1_IF1_TYPE"/>
    <property type="match status" value="1"/>
</dbReference>
<evidence type="ECO:0000255" key="1">
    <source>
        <dbReference type="HAMAP-Rule" id="MF_00075"/>
    </source>
</evidence>
<reference key="1">
    <citation type="journal article" date="2007" name="Genome Res.">
        <title>Genome sequence of a proteolytic (Group I) Clostridium botulinum strain Hall A and comparative analysis of the clostridial genomes.</title>
        <authorList>
            <person name="Sebaihia M."/>
            <person name="Peck M.W."/>
            <person name="Minton N.P."/>
            <person name="Thomson N.R."/>
            <person name="Holden M.T.G."/>
            <person name="Mitchell W.J."/>
            <person name="Carter A.T."/>
            <person name="Bentley S.D."/>
            <person name="Mason D.R."/>
            <person name="Crossman L."/>
            <person name="Paul C.J."/>
            <person name="Ivens A."/>
            <person name="Wells-Bennik M.H.J."/>
            <person name="Davis I.J."/>
            <person name="Cerdeno-Tarraga A.M."/>
            <person name="Churcher C."/>
            <person name="Quail M.A."/>
            <person name="Chillingworth T."/>
            <person name="Feltwell T."/>
            <person name="Fraser A."/>
            <person name="Goodhead I."/>
            <person name="Hance Z."/>
            <person name="Jagels K."/>
            <person name="Larke N."/>
            <person name="Maddison M."/>
            <person name="Moule S."/>
            <person name="Mungall K."/>
            <person name="Norbertczak H."/>
            <person name="Rabbinowitsch E."/>
            <person name="Sanders M."/>
            <person name="Simmonds M."/>
            <person name="White B."/>
            <person name="Whithead S."/>
            <person name="Parkhill J."/>
        </authorList>
    </citation>
    <scope>NUCLEOTIDE SEQUENCE [LARGE SCALE GENOMIC DNA]</scope>
    <source>
        <strain>Hall / ATCC 3502 / NCTC 13319 / Type A</strain>
    </source>
</reference>
<reference key="2">
    <citation type="journal article" date="2007" name="PLoS ONE">
        <title>Analysis of the neurotoxin complex genes in Clostridium botulinum A1-A4 and B1 strains: BoNT/A3, /Ba4 and /B1 clusters are located within plasmids.</title>
        <authorList>
            <person name="Smith T.J."/>
            <person name="Hill K.K."/>
            <person name="Foley B.T."/>
            <person name="Detter J.C."/>
            <person name="Munk A.C."/>
            <person name="Bruce D.C."/>
            <person name="Doggett N.A."/>
            <person name="Smith L.A."/>
            <person name="Marks J.D."/>
            <person name="Xie G."/>
            <person name="Brettin T.S."/>
        </authorList>
    </citation>
    <scope>NUCLEOTIDE SEQUENCE [LARGE SCALE GENOMIC DNA]</scope>
    <source>
        <strain>Hall / ATCC 3502 / NCTC 13319 / Type A</strain>
    </source>
</reference>
<protein>
    <recommendedName>
        <fullName evidence="1">Translation initiation factor IF-1</fullName>
    </recommendedName>
</protein>
<organism>
    <name type="scientific">Clostridium botulinum (strain Hall / ATCC 3502 / NCTC 13319 / Type A)</name>
    <dbReference type="NCBI Taxonomy" id="441771"/>
    <lineage>
        <taxon>Bacteria</taxon>
        <taxon>Bacillati</taxon>
        <taxon>Bacillota</taxon>
        <taxon>Clostridia</taxon>
        <taxon>Eubacteriales</taxon>
        <taxon>Clostridiaceae</taxon>
        <taxon>Clostridium</taxon>
    </lineage>
</organism>
<sequence length="72" mass="8184">MSKDDVIEMQGTVLESLPNAMFEVELESGHKIIAHISGKLRMNFIRILPGDKVTVELSPYDLTRGRITWRAK</sequence>
<feature type="chain" id="PRO_0000338804" description="Translation initiation factor IF-1">
    <location>
        <begin position="1"/>
        <end position="72"/>
    </location>
</feature>
<feature type="domain" description="S1-like" evidence="1">
    <location>
        <begin position="1"/>
        <end position="72"/>
    </location>
</feature>